<gene>
    <name evidence="2" type="primary">accD</name>
    <name type="ordered locus">MoinCp030</name>
</gene>
<feature type="chain" id="PRO_0000359151" description="Acetyl-coenzyme A carboxylase carboxyl transferase subunit beta, chloroplastic">
    <location>
        <begin position="1"/>
        <end position="498"/>
    </location>
</feature>
<feature type="domain" description="CoA carboxyltransferase N-terminal" evidence="3">
    <location>
        <begin position="231"/>
        <end position="498"/>
    </location>
</feature>
<feature type="zinc finger region" description="C4-type" evidence="2">
    <location>
        <begin position="235"/>
        <end position="257"/>
    </location>
</feature>
<feature type="region of interest" description="Disordered" evidence="4">
    <location>
        <begin position="36"/>
        <end position="59"/>
    </location>
</feature>
<feature type="binding site" evidence="2">
    <location>
        <position position="235"/>
    </location>
    <ligand>
        <name>Zn(2+)</name>
        <dbReference type="ChEBI" id="CHEBI:29105"/>
    </ligand>
</feature>
<feature type="binding site" evidence="2">
    <location>
        <position position="238"/>
    </location>
    <ligand>
        <name>Zn(2+)</name>
        <dbReference type="ChEBI" id="CHEBI:29105"/>
    </ligand>
</feature>
<feature type="binding site" evidence="2">
    <location>
        <position position="254"/>
    </location>
    <ligand>
        <name>Zn(2+)</name>
        <dbReference type="ChEBI" id="CHEBI:29105"/>
    </ligand>
</feature>
<feature type="binding site" evidence="2">
    <location>
        <position position="257"/>
    </location>
    <ligand>
        <name>Zn(2+)</name>
        <dbReference type="ChEBI" id="CHEBI:29105"/>
    </ligand>
</feature>
<reference key="1">
    <citation type="submission" date="2005-09" db="EMBL/GenBank/DDBJ databases">
        <title>The chloroplast genome of mulberry: structural features and comparative analysis.</title>
        <authorList>
            <person name="Ravi V."/>
            <person name="Khurana J.P."/>
            <person name="Tyagi A.K."/>
            <person name="Khurana P."/>
        </authorList>
    </citation>
    <scope>NUCLEOTIDE SEQUENCE [LARGE SCALE GENOMIC DNA]</scope>
    <source>
        <strain>cv. K2</strain>
    </source>
</reference>
<protein>
    <recommendedName>
        <fullName evidence="2">Acetyl-coenzyme A carboxylase carboxyl transferase subunit beta, chloroplastic</fullName>
        <shortName evidence="2">ACCase subunit beta</shortName>
        <shortName evidence="2">Acetyl-CoA carboxylase carboxyltransferase subunit beta</shortName>
        <ecNumber evidence="2">2.1.3.15</ecNumber>
    </recommendedName>
</protein>
<organism>
    <name type="scientific">Morus indica</name>
    <name type="common">Mulberry</name>
    <dbReference type="NCBI Taxonomy" id="248361"/>
    <lineage>
        <taxon>Eukaryota</taxon>
        <taxon>Viridiplantae</taxon>
        <taxon>Streptophyta</taxon>
        <taxon>Embryophyta</taxon>
        <taxon>Tracheophyta</taxon>
        <taxon>Spermatophyta</taxon>
        <taxon>Magnoliopsida</taxon>
        <taxon>eudicotyledons</taxon>
        <taxon>Gunneridae</taxon>
        <taxon>Pentapetalae</taxon>
        <taxon>rosids</taxon>
        <taxon>fabids</taxon>
        <taxon>Rosales</taxon>
        <taxon>Moraceae</taxon>
        <taxon>Moreae</taxon>
        <taxon>Morus</taxon>
    </lineage>
</organism>
<name>ACCD_MORIN</name>
<geneLocation type="chloroplast"/>
<dbReference type="EC" id="2.1.3.15" evidence="2"/>
<dbReference type="EMBL" id="DQ226511">
    <property type="protein sequence ID" value="ABB20967.1"/>
    <property type="molecule type" value="Genomic_DNA"/>
</dbReference>
<dbReference type="RefSeq" id="YP_762270.1">
    <property type="nucleotide sequence ID" value="NC_008359.1"/>
</dbReference>
<dbReference type="SMR" id="Q09X08"/>
<dbReference type="GeneID" id="4290675"/>
<dbReference type="UniPathway" id="UPA00655">
    <property type="reaction ID" value="UER00711"/>
</dbReference>
<dbReference type="GO" id="GO:0009317">
    <property type="term" value="C:acetyl-CoA carboxylase complex"/>
    <property type="evidence" value="ECO:0007669"/>
    <property type="project" value="InterPro"/>
</dbReference>
<dbReference type="GO" id="GO:0009570">
    <property type="term" value="C:chloroplast stroma"/>
    <property type="evidence" value="ECO:0007669"/>
    <property type="project" value="UniProtKB-SubCell"/>
</dbReference>
<dbReference type="GO" id="GO:0003989">
    <property type="term" value="F:acetyl-CoA carboxylase activity"/>
    <property type="evidence" value="ECO:0007669"/>
    <property type="project" value="InterPro"/>
</dbReference>
<dbReference type="GO" id="GO:0005524">
    <property type="term" value="F:ATP binding"/>
    <property type="evidence" value="ECO:0007669"/>
    <property type="project" value="UniProtKB-KW"/>
</dbReference>
<dbReference type="GO" id="GO:0016743">
    <property type="term" value="F:carboxyl- or carbamoyltransferase activity"/>
    <property type="evidence" value="ECO:0007669"/>
    <property type="project" value="UniProtKB-UniRule"/>
</dbReference>
<dbReference type="GO" id="GO:0008270">
    <property type="term" value="F:zinc ion binding"/>
    <property type="evidence" value="ECO:0007669"/>
    <property type="project" value="UniProtKB-UniRule"/>
</dbReference>
<dbReference type="GO" id="GO:0006633">
    <property type="term" value="P:fatty acid biosynthetic process"/>
    <property type="evidence" value="ECO:0007669"/>
    <property type="project" value="UniProtKB-KW"/>
</dbReference>
<dbReference type="GO" id="GO:2001295">
    <property type="term" value="P:malonyl-CoA biosynthetic process"/>
    <property type="evidence" value="ECO:0007669"/>
    <property type="project" value="UniProtKB-UniRule"/>
</dbReference>
<dbReference type="Gene3D" id="3.90.226.10">
    <property type="entry name" value="2-enoyl-CoA Hydratase, Chain A, domain 1"/>
    <property type="match status" value="1"/>
</dbReference>
<dbReference type="HAMAP" id="MF_01395">
    <property type="entry name" value="AcetylCoA_CT_beta"/>
    <property type="match status" value="1"/>
</dbReference>
<dbReference type="InterPro" id="IPR034733">
    <property type="entry name" value="AcCoA_carboxyl_beta"/>
</dbReference>
<dbReference type="InterPro" id="IPR000438">
    <property type="entry name" value="Acetyl_CoA_COase_Trfase_b_su"/>
</dbReference>
<dbReference type="InterPro" id="IPR029045">
    <property type="entry name" value="ClpP/crotonase-like_dom_sf"/>
</dbReference>
<dbReference type="InterPro" id="IPR011762">
    <property type="entry name" value="COA_CT_N"/>
</dbReference>
<dbReference type="NCBIfam" id="TIGR00515">
    <property type="entry name" value="accD"/>
    <property type="match status" value="1"/>
</dbReference>
<dbReference type="PANTHER" id="PTHR42995">
    <property type="entry name" value="ACETYL-COENZYME A CARBOXYLASE CARBOXYL TRANSFERASE SUBUNIT BETA, CHLOROPLASTIC"/>
    <property type="match status" value="1"/>
</dbReference>
<dbReference type="PANTHER" id="PTHR42995:SF5">
    <property type="entry name" value="ACETYL-COENZYME A CARBOXYLASE CARBOXYL TRANSFERASE SUBUNIT BETA, CHLOROPLASTIC"/>
    <property type="match status" value="1"/>
</dbReference>
<dbReference type="Pfam" id="PF01039">
    <property type="entry name" value="Carboxyl_trans"/>
    <property type="match status" value="1"/>
</dbReference>
<dbReference type="PRINTS" id="PR01070">
    <property type="entry name" value="ACCCTRFRASEB"/>
</dbReference>
<dbReference type="SUPFAM" id="SSF52096">
    <property type="entry name" value="ClpP/crotonase"/>
    <property type="match status" value="1"/>
</dbReference>
<dbReference type="PROSITE" id="PS50980">
    <property type="entry name" value="COA_CT_NTER"/>
    <property type="match status" value="1"/>
</dbReference>
<sequence length="498" mass="56413">MEKWRFDSMLFSGVLEYRCGLSKSINSLGDPIENTSVNEDPIINDMDKDIPSGSDSDNSSYSNVDHLVGVRYIRNFLSDDTFLVRDSNRDSYTIYFDIENQIFEIDNHDSFISEPENSFYSYQNSSYLNNVSKNDDPRYDRYVYDTQYSWNNHINSCIGSYLRYQICIDSDILTSSDNYNDNYIYTYICGERVNSNESESSNIRTGADDSDLTTIRESSNDLDVTQKYRHLWVQCENCYGLNYKRFLKSKMNICEHCGCHLKMSSSDRIELLIDPGTWDPMDEDMVSLDPIEFNSEEEPYKDRIDSYQRKTGLTEAVQTGTGKLNGIPVAIGVMDFQFMGGSMGSVVGEKITRLIEYATNQSLPLILVCASGGARMQEGSLSLMQMAKISSALYDYQSNKKLFYIAILTSPTTGGVTASFGMLGDIIIAEPNAYIAFAGKRVIEQTLNKTVPEGSQVAEYLFHKGLFDPIVPRNPLKGVLSELFQLHAFFPLNQNSIK</sequence>
<comment type="function">
    <text evidence="2">Component of the acetyl coenzyme A carboxylase (ACC) complex. Biotin carboxylase (BC) catalyzes the carboxylation of biotin on its carrier protein (BCCP) and then the CO(2) group is transferred by the transcarboxylase to acetyl-CoA to form malonyl-CoA.</text>
</comment>
<comment type="catalytic activity">
    <reaction evidence="2">
        <text>N(6)-carboxybiotinyl-L-lysyl-[protein] + acetyl-CoA = N(6)-biotinyl-L-lysyl-[protein] + malonyl-CoA</text>
        <dbReference type="Rhea" id="RHEA:54728"/>
        <dbReference type="Rhea" id="RHEA-COMP:10505"/>
        <dbReference type="Rhea" id="RHEA-COMP:10506"/>
        <dbReference type="ChEBI" id="CHEBI:57288"/>
        <dbReference type="ChEBI" id="CHEBI:57384"/>
        <dbReference type="ChEBI" id="CHEBI:83144"/>
        <dbReference type="ChEBI" id="CHEBI:83145"/>
        <dbReference type="EC" id="2.1.3.15"/>
    </reaction>
</comment>
<comment type="cofactor">
    <cofactor evidence="2">
        <name>Zn(2+)</name>
        <dbReference type="ChEBI" id="CHEBI:29105"/>
    </cofactor>
    <text evidence="2">Binds 1 zinc ion per subunit.</text>
</comment>
<comment type="pathway">
    <text evidence="2">Lipid metabolism; malonyl-CoA biosynthesis; malonyl-CoA from acetyl-CoA: step 1/1.</text>
</comment>
<comment type="subunit">
    <text evidence="1">Acetyl-CoA carboxylase is a heterohexamer composed of biotin carboxyl carrier protein, biotin carboxylase and 2 subunits each of ACCase subunit alpha and ACCase plastid-coded subunit beta (accD).</text>
</comment>
<comment type="subcellular location">
    <subcellularLocation>
        <location evidence="2">Plastid</location>
        <location evidence="2">Chloroplast stroma</location>
    </subcellularLocation>
</comment>
<comment type="similarity">
    <text evidence="2">Belongs to the AccD/PCCB family.</text>
</comment>
<keyword id="KW-0067">ATP-binding</keyword>
<keyword id="KW-0150">Chloroplast</keyword>
<keyword id="KW-0275">Fatty acid biosynthesis</keyword>
<keyword id="KW-0276">Fatty acid metabolism</keyword>
<keyword id="KW-0444">Lipid biosynthesis</keyword>
<keyword id="KW-0443">Lipid metabolism</keyword>
<keyword id="KW-0479">Metal-binding</keyword>
<keyword id="KW-0547">Nucleotide-binding</keyword>
<keyword id="KW-0934">Plastid</keyword>
<keyword id="KW-0808">Transferase</keyword>
<keyword id="KW-0862">Zinc</keyword>
<keyword id="KW-0863">Zinc-finger</keyword>
<accession>Q09X08</accession>
<evidence type="ECO:0000250" key="1"/>
<evidence type="ECO:0000255" key="2">
    <source>
        <dbReference type="HAMAP-Rule" id="MF_01395"/>
    </source>
</evidence>
<evidence type="ECO:0000255" key="3">
    <source>
        <dbReference type="PROSITE-ProRule" id="PRU01136"/>
    </source>
</evidence>
<evidence type="ECO:0000256" key="4">
    <source>
        <dbReference type="SAM" id="MobiDB-lite"/>
    </source>
</evidence>
<proteinExistence type="inferred from homology"/>